<comment type="function">
    <text>By its binding to cytohesin-1 (CYTH1), it modifies activation of ARFs by CYTH1 and its precise function may be to sequester CYTH1 in the cytoplasm.</text>
</comment>
<comment type="subunit">
    <text evidence="3 4 5">Interacts with CYTH1 and SNX27.</text>
</comment>
<comment type="interaction">
    <interactant intactId="EBI-997814">
        <id>O60759</id>
    </interactant>
    <interactant intactId="EBI-997830">
        <id>Q15438</id>
        <label>CYTH1</label>
    </interactant>
    <organismsDiffer>false</organismsDiffer>
    <experiments>8</experiments>
</comment>
<comment type="interaction">
    <interactant intactId="EBI-997814">
        <id>O60759</id>
    </interactant>
    <interactant intactId="EBI-348399">
        <id>P22607</id>
        <label>FGFR3</label>
    </interactant>
    <organismsDiffer>false</organismsDiffer>
    <experiments>3</experiments>
</comment>
<comment type="interaction">
    <interactant intactId="EBI-997814">
        <id>O60759</id>
    </interactant>
    <interactant intactId="EBI-8472129">
        <id>Q9HAQ2</id>
        <label>KIF9</label>
    </interactant>
    <organismsDiffer>false</organismsDiffer>
    <experiments>3</experiments>
</comment>
<comment type="interaction">
    <interactant intactId="EBI-997814">
        <id>O60759</id>
    </interactant>
    <interactant intactId="EBI-348259">
        <id>Q96EZ8</id>
        <label>MCRS1</label>
    </interactant>
    <organismsDiffer>false</organismsDiffer>
    <experiments>3</experiments>
</comment>
<comment type="interaction">
    <interactant intactId="EBI-997814">
        <id>O60759</id>
    </interactant>
    <interactant intactId="EBI-748391">
        <id>Q9BWG6</id>
        <label>SCNM1</label>
    </interactant>
    <organismsDiffer>false</organismsDiffer>
    <experiments>3</experiments>
</comment>
<comment type="interaction">
    <interactant intactId="EBI-997814">
        <id>O60759</id>
    </interactant>
    <interactant intactId="EBI-5235340">
        <id>Q7Z699</id>
        <label>SPRED1</label>
    </interactant>
    <organismsDiffer>false</organismsDiffer>
    <experiments>3</experiments>
</comment>
<comment type="subcellular location">
    <subcellularLocation>
        <location>Cytoplasm</location>
    </subcellularLocation>
    <subcellularLocation>
        <location>Early endosome</location>
    </subcellularLocation>
    <text>Recruited from the cytosol to endosomes by SNX27.</text>
</comment>
<comment type="alternative products">
    <event type="alternative splicing"/>
    <isoform>
        <id>O60759-1</id>
        <name>1</name>
        <sequence type="displayed"/>
    </isoform>
    <isoform>
        <id>O60759-2</id>
        <name>2</name>
        <sequence type="described" ref="VSP_055502"/>
    </isoform>
</comment>
<comment type="tissue specificity">
    <text evidence="3 4">Expressed in lymph nodes, thymus, spleen, lung, peripheral blood leukocytes and bone marrow.</text>
</comment>
<comment type="induction">
    <text evidence="4">By TNF and bacterial lipopolysaccharides (LPS).</text>
</comment>
<comment type="sequence caution" evidence="9">
    <conflict type="erroneous initiation">
        <sequence resource="EMBL-CDS" id="AAA16575"/>
    </conflict>
</comment>
<proteinExistence type="evidence at protein level"/>
<organism>
    <name type="scientific">Homo sapiens</name>
    <name type="common">Human</name>
    <dbReference type="NCBI Taxonomy" id="9606"/>
    <lineage>
        <taxon>Eukaryota</taxon>
        <taxon>Metazoa</taxon>
        <taxon>Chordata</taxon>
        <taxon>Craniata</taxon>
        <taxon>Vertebrata</taxon>
        <taxon>Euteleostomi</taxon>
        <taxon>Mammalia</taxon>
        <taxon>Eutheria</taxon>
        <taxon>Euarchontoglires</taxon>
        <taxon>Primates</taxon>
        <taxon>Haplorrhini</taxon>
        <taxon>Catarrhini</taxon>
        <taxon>Hominidae</taxon>
        <taxon>Homo</taxon>
    </lineage>
</organism>
<evidence type="ECO:0000255" key="1"/>
<evidence type="ECO:0000255" key="2">
    <source>
        <dbReference type="PROSITE-ProRule" id="PRU00143"/>
    </source>
</evidence>
<evidence type="ECO:0000269" key="3">
    <source>
    </source>
</evidence>
<evidence type="ECO:0000269" key="4">
    <source>
    </source>
</evidence>
<evidence type="ECO:0000269" key="5">
    <source>
    </source>
</evidence>
<evidence type="ECO:0000269" key="6">
    <source>
    </source>
</evidence>
<evidence type="ECO:0000269" key="7">
    <source>
    </source>
</evidence>
<evidence type="ECO:0000303" key="8">
    <source>
    </source>
</evidence>
<evidence type="ECO:0000305" key="9"/>
<evidence type="ECO:0007829" key="10">
    <source>
        <dbReference type="PDB" id="2Z17"/>
    </source>
</evidence>
<reference key="1">
    <citation type="journal article" date="2002" name="Proc. Natl. Acad. Sci. U.S.A.">
        <title>Cybr, a cytokine-inducible protein that binds cytohesin-1 and regulates its activity.</title>
        <authorList>
            <person name="Tang P."/>
            <person name="Cheng T.P."/>
            <person name="Agnello D."/>
            <person name="Wu C.-Y."/>
            <person name="Hissong B.D."/>
            <person name="Watford W.T."/>
            <person name="Ahn H.-J."/>
            <person name="Galon J."/>
            <person name="Moss J."/>
            <person name="Vaughan M."/>
            <person name="O'Shea J.J."/>
            <person name="Gadina M."/>
        </authorList>
    </citation>
    <scope>NUCLEOTIDE SEQUENCE [MRNA] (ISOFORM 1)</scope>
    <scope>TISSUE SPECIFICITY</scope>
    <scope>DOMAIN</scope>
    <scope>INTERACTION WITH CYTH1</scope>
</reference>
<reference key="2">
    <citation type="journal article" date="2003" name="EMBO J.">
        <title>Attenuation of cell adhesion in lymphocytes is regulated by CYTIP, a protein which mediates signal complex sequestration.</title>
        <authorList>
            <person name="Boehm T."/>
            <person name="Hofer S."/>
            <person name="Winklehner P."/>
            <person name="Kellersch B."/>
            <person name="Geiger C."/>
            <person name="Trockenbacher A."/>
            <person name="Neyer S."/>
            <person name="Fiegl H."/>
            <person name="Ebner S."/>
            <person name="Ivarsson L."/>
            <person name="Schneider R."/>
            <person name="Kremmer E."/>
            <person name="Heufler C."/>
            <person name="Kolanus W."/>
        </authorList>
    </citation>
    <scope>NUCLEOTIDE SEQUENCE [MRNA] (ISOFORM 1)</scope>
    <scope>SUBCELLULAR LOCATION</scope>
    <scope>INDUCTION</scope>
    <scope>DOMAIN</scope>
    <scope>TISSUE SPECIFICITY</scope>
    <scope>INTERACTION WITH CYTH1</scope>
    <scope>MUTAGENESIS OF LYS-82; PHE-90 AND ILE-92</scope>
</reference>
<reference key="3">
    <citation type="journal article" date="2004" name="Nat. Genet.">
        <title>Complete sequencing and characterization of 21,243 full-length human cDNAs.</title>
        <authorList>
            <person name="Ota T."/>
            <person name="Suzuki Y."/>
            <person name="Nishikawa T."/>
            <person name="Otsuki T."/>
            <person name="Sugiyama T."/>
            <person name="Irie R."/>
            <person name="Wakamatsu A."/>
            <person name="Hayashi K."/>
            <person name="Sato H."/>
            <person name="Nagai K."/>
            <person name="Kimura K."/>
            <person name="Makita H."/>
            <person name="Sekine M."/>
            <person name="Obayashi M."/>
            <person name="Nishi T."/>
            <person name="Shibahara T."/>
            <person name="Tanaka T."/>
            <person name="Ishii S."/>
            <person name="Yamamoto J."/>
            <person name="Saito K."/>
            <person name="Kawai Y."/>
            <person name="Isono Y."/>
            <person name="Nakamura Y."/>
            <person name="Nagahari K."/>
            <person name="Murakami K."/>
            <person name="Yasuda T."/>
            <person name="Iwayanagi T."/>
            <person name="Wagatsuma M."/>
            <person name="Shiratori A."/>
            <person name="Sudo H."/>
            <person name="Hosoiri T."/>
            <person name="Kaku Y."/>
            <person name="Kodaira H."/>
            <person name="Kondo H."/>
            <person name="Sugawara M."/>
            <person name="Takahashi M."/>
            <person name="Kanda K."/>
            <person name="Yokoi T."/>
            <person name="Furuya T."/>
            <person name="Kikkawa E."/>
            <person name="Omura Y."/>
            <person name="Abe K."/>
            <person name="Kamihara K."/>
            <person name="Katsuta N."/>
            <person name="Sato K."/>
            <person name="Tanikawa M."/>
            <person name="Yamazaki M."/>
            <person name="Ninomiya K."/>
            <person name="Ishibashi T."/>
            <person name="Yamashita H."/>
            <person name="Murakawa K."/>
            <person name="Fujimori K."/>
            <person name="Tanai H."/>
            <person name="Kimata M."/>
            <person name="Watanabe M."/>
            <person name="Hiraoka S."/>
            <person name="Chiba Y."/>
            <person name="Ishida S."/>
            <person name="Ono Y."/>
            <person name="Takiguchi S."/>
            <person name="Watanabe S."/>
            <person name="Yosida M."/>
            <person name="Hotuta T."/>
            <person name="Kusano J."/>
            <person name="Kanehori K."/>
            <person name="Takahashi-Fujii A."/>
            <person name="Hara H."/>
            <person name="Tanase T.-O."/>
            <person name="Nomura Y."/>
            <person name="Togiya S."/>
            <person name="Komai F."/>
            <person name="Hara R."/>
            <person name="Takeuchi K."/>
            <person name="Arita M."/>
            <person name="Imose N."/>
            <person name="Musashino K."/>
            <person name="Yuuki H."/>
            <person name="Oshima A."/>
            <person name="Sasaki N."/>
            <person name="Aotsuka S."/>
            <person name="Yoshikawa Y."/>
            <person name="Matsunawa H."/>
            <person name="Ichihara T."/>
            <person name="Shiohata N."/>
            <person name="Sano S."/>
            <person name="Moriya S."/>
            <person name="Momiyama H."/>
            <person name="Satoh N."/>
            <person name="Takami S."/>
            <person name="Terashima Y."/>
            <person name="Suzuki O."/>
            <person name="Nakagawa S."/>
            <person name="Senoh A."/>
            <person name="Mizoguchi H."/>
            <person name="Goto Y."/>
            <person name="Shimizu F."/>
            <person name="Wakebe H."/>
            <person name="Hishigaki H."/>
            <person name="Watanabe T."/>
            <person name="Sugiyama A."/>
            <person name="Takemoto M."/>
            <person name="Kawakami B."/>
            <person name="Yamazaki M."/>
            <person name="Watanabe K."/>
            <person name="Kumagai A."/>
            <person name="Itakura S."/>
            <person name="Fukuzumi Y."/>
            <person name="Fujimori Y."/>
            <person name="Komiyama M."/>
            <person name="Tashiro H."/>
            <person name="Tanigami A."/>
            <person name="Fujiwara T."/>
            <person name="Ono T."/>
            <person name="Yamada K."/>
            <person name="Fujii Y."/>
            <person name="Ozaki K."/>
            <person name="Hirao M."/>
            <person name="Ohmori Y."/>
            <person name="Kawabata A."/>
            <person name="Hikiji T."/>
            <person name="Kobatake N."/>
            <person name="Inagaki H."/>
            <person name="Ikema Y."/>
            <person name="Okamoto S."/>
            <person name="Okitani R."/>
            <person name="Kawakami T."/>
            <person name="Noguchi S."/>
            <person name="Itoh T."/>
            <person name="Shigeta K."/>
            <person name="Senba T."/>
            <person name="Matsumura K."/>
            <person name="Nakajima Y."/>
            <person name="Mizuno T."/>
            <person name="Morinaga M."/>
            <person name="Sasaki M."/>
            <person name="Togashi T."/>
            <person name="Oyama M."/>
            <person name="Hata H."/>
            <person name="Watanabe M."/>
            <person name="Komatsu T."/>
            <person name="Mizushima-Sugano J."/>
            <person name="Satoh T."/>
            <person name="Shirai Y."/>
            <person name="Takahashi Y."/>
            <person name="Nakagawa K."/>
            <person name="Okumura K."/>
            <person name="Nagase T."/>
            <person name="Nomura N."/>
            <person name="Kikuchi H."/>
            <person name="Masuho Y."/>
            <person name="Yamashita R."/>
            <person name="Nakai K."/>
            <person name="Yada T."/>
            <person name="Nakamura Y."/>
            <person name="Ohara O."/>
            <person name="Isogai T."/>
            <person name="Sugano S."/>
        </authorList>
    </citation>
    <scope>NUCLEOTIDE SEQUENCE [LARGE SCALE MRNA] (ISOFORM 2)</scope>
    <source>
        <tissue>Mammary gland</tissue>
    </source>
</reference>
<reference key="4">
    <citation type="journal article" date="2005" name="Nature">
        <title>Generation and annotation of the DNA sequences of human chromosomes 2 and 4.</title>
        <authorList>
            <person name="Hillier L.W."/>
            <person name="Graves T.A."/>
            <person name="Fulton R.S."/>
            <person name="Fulton L.A."/>
            <person name="Pepin K.H."/>
            <person name="Minx P."/>
            <person name="Wagner-McPherson C."/>
            <person name="Layman D."/>
            <person name="Wylie K."/>
            <person name="Sekhon M."/>
            <person name="Becker M.C."/>
            <person name="Fewell G.A."/>
            <person name="Delehaunty K.D."/>
            <person name="Miner T.L."/>
            <person name="Nash W.E."/>
            <person name="Kremitzki C."/>
            <person name="Oddy L."/>
            <person name="Du H."/>
            <person name="Sun H."/>
            <person name="Bradshaw-Cordum H."/>
            <person name="Ali J."/>
            <person name="Carter J."/>
            <person name="Cordes M."/>
            <person name="Harris A."/>
            <person name="Isak A."/>
            <person name="van Brunt A."/>
            <person name="Nguyen C."/>
            <person name="Du F."/>
            <person name="Courtney L."/>
            <person name="Kalicki J."/>
            <person name="Ozersky P."/>
            <person name="Abbott S."/>
            <person name="Armstrong J."/>
            <person name="Belter E.A."/>
            <person name="Caruso L."/>
            <person name="Cedroni M."/>
            <person name="Cotton M."/>
            <person name="Davidson T."/>
            <person name="Desai A."/>
            <person name="Elliott G."/>
            <person name="Erb T."/>
            <person name="Fronick C."/>
            <person name="Gaige T."/>
            <person name="Haakenson W."/>
            <person name="Haglund K."/>
            <person name="Holmes A."/>
            <person name="Harkins R."/>
            <person name="Kim K."/>
            <person name="Kruchowski S.S."/>
            <person name="Strong C.M."/>
            <person name="Grewal N."/>
            <person name="Goyea E."/>
            <person name="Hou S."/>
            <person name="Levy A."/>
            <person name="Martinka S."/>
            <person name="Mead K."/>
            <person name="McLellan M.D."/>
            <person name="Meyer R."/>
            <person name="Randall-Maher J."/>
            <person name="Tomlinson C."/>
            <person name="Dauphin-Kohlberg S."/>
            <person name="Kozlowicz-Reilly A."/>
            <person name="Shah N."/>
            <person name="Swearengen-Shahid S."/>
            <person name="Snider J."/>
            <person name="Strong J.T."/>
            <person name="Thompson J."/>
            <person name="Yoakum M."/>
            <person name="Leonard S."/>
            <person name="Pearman C."/>
            <person name="Trani L."/>
            <person name="Radionenko M."/>
            <person name="Waligorski J.E."/>
            <person name="Wang C."/>
            <person name="Rock S.M."/>
            <person name="Tin-Wollam A.-M."/>
            <person name="Maupin R."/>
            <person name="Latreille P."/>
            <person name="Wendl M.C."/>
            <person name="Yang S.-P."/>
            <person name="Pohl C."/>
            <person name="Wallis J.W."/>
            <person name="Spieth J."/>
            <person name="Bieri T.A."/>
            <person name="Berkowicz N."/>
            <person name="Nelson J.O."/>
            <person name="Osborne J."/>
            <person name="Ding L."/>
            <person name="Meyer R."/>
            <person name="Sabo A."/>
            <person name="Shotland Y."/>
            <person name="Sinha P."/>
            <person name="Wohldmann P.E."/>
            <person name="Cook L.L."/>
            <person name="Hickenbotham M.T."/>
            <person name="Eldred J."/>
            <person name="Williams D."/>
            <person name="Jones T.A."/>
            <person name="She X."/>
            <person name="Ciccarelli F.D."/>
            <person name="Izaurralde E."/>
            <person name="Taylor J."/>
            <person name="Schmutz J."/>
            <person name="Myers R.M."/>
            <person name="Cox D.R."/>
            <person name="Huang X."/>
            <person name="McPherson J.D."/>
            <person name="Mardis E.R."/>
            <person name="Clifton S.W."/>
            <person name="Warren W.C."/>
            <person name="Chinwalla A.T."/>
            <person name="Eddy S.R."/>
            <person name="Marra M.A."/>
            <person name="Ovcharenko I."/>
            <person name="Furey T.S."/>
            <person name="Miller W."/>
            <person name="Eichler E.E."/>
            <person name="Bork P."/>
            <person name="Suyama M."/>
            <person name="Torrents D."/>
            <person name="Waterston R.H."/>
            <person name="Wilson R.K."/>
        </authorList>
    </citation>
    <scope>NUCLEOTIDE SEQUENCE [LARGE SCALE GENOMIC DNA]</scope>
</reference>
<reference key="5">
    <citation type="journal article" date="2004" name="Genome Res.">
        <title>The status, quality, and expansion of the NIH full-length cDNA project: the Mammalian Gene Collection (MGC).</title>
        <authorList>
            <consortium name="The MGC Project Team"/>
        </authorList>
    </citation>
    <scope>NUCLEOTIDE SEQUENCE [LARGE SCALE MRNA] (ISOFORM 1)</scope>
    <source>
        <tissue>Testis</tissue>
    </source>
</reference>
<reference key="6">
    <citation type="journal article" date="1993" name="Biochim. Biophys. Acta">
        <title>Cloning a cDNA from human NK/T cells which codes for an unusual leucine zipper containing protein.</title>
        <authorList>
            <person name="Dixon B."/>
            <person name="Sahely B."/>
            <person name="Liu L."/>
            <person name="Pohajdak B."/>
        </authorList>
    </citation>
    <scope>NUCLEOTIDE SEQUENCE [MRNA] OF 6-359 (ISOFORM 1)</scope>
    <scope>VARIANT ASN-37</scope>
    <source>
        <tissue>Blood</tissue>
    </source>
</reference>
<reference key="7">
    <citation type="journal article" date="2007" name="Biochem. Biophys. Res. Commun.">
        <title>Sorting nexin 27 interacts with the Cytohesin associated scaffolding protein (CASP) in lymphocytes.</title>
        <authorList>
            <person name="MacNeil A.J."/>
            <person name="Mansour M."/>
            <person name="Pohajdak B."/>
        </authorList>
    </citation>
    <scope>SUBCELLULAR LOCATION</scope>
    <scope>INTERACTION WITH SNX27</scope>
</reference>
<reference key="8">
    <citation type="journal article" date="2011" name="Nature">
        <title>Exome sequencing identifies frequent mutation of the SWI/SNF complex gene PBRM1 in renal carcinoma.</title>
        <authorList>
            <person name="Varela I."/>
            <person name="Tarpey P."/>
            <person name="Raine K."/>
            <person name="Huang D."/>
            <person name="Ong C.K."/>
            <person name="Stephens P."/>
            <person name="Davies H."/>
            <person name="Jones D."/>
            <person name="Lin M.L."/>
            <person name="Teague J."/>
            <person name="Bignell G."/>
            <person name="Butler A."/>
            <person name="Cho J."/>
            <person name="Dalgliesh G.L."/>
            <person name="Galappaththige D."/>
            <person name="Greenman C."/>
            <person name="Hardy C."/>
            <person name="Jia M."/>
            <person name="Latimer C."/>
            <person name="Lau K.W."/>
            <person name="Marshall J."/>
            <person name="McLaren S."/>
            <person name="Menzies A."/>
            <person name="Mudie L."/>
            <person name="Stebbings L."/>
            <person name="Largaespada D.A."/>
            <person name="Wessels L.F.A."/>
            <person name="Richard S."/>
            <person name="Kahnoski R.J."/>
            <person name="Anema J."/>
            <person name="Tuveson D.A."/>
            <person name="Perez-Mancera P.A."/>
            <person name="Mustonen V."/>
            <person name="Fischer A."/>
            <person name="Adams D.J."/>
            <person name="Rust A."/>
            <person name="Chan-On W."/>
            <person name="Subimerb C."/>
            <person name="Dykema K."/>
            <person name="Furge K."/>
            <person name="Campbell P.J."/>
            <person name="Teh B.T."/>
            <person name="Stratton M.R."/>
            <person name="Futreal P.A."/>
        </authorList>
    </citation>
    <scope>VARIANT SER-329</scope>
</reference>
<feature type="chain" id="PRO_0000097061" description="Cytohesin-interacting protein">
    <location>
        <begin position="1"/>
        <end position="359"/>
    </location>
</feature>
<feature type="domain" description="PDZ" evidence="2">
    <location>
        <begin position="77"/>
        <end position="166"/>
    </location>
</feature>
<feature type="region of interest" description="Interaction with CYTH1">
    <location>
        <begin position="166"/>
        <end position="188"/>
    </location>
</feature>
<feature type="coiled-coil region" evidence="1">
    <location>
        <begin position="166"/>
        <end position="188"/>
    </location>
</feature>
<feature type="splice variant" id="VSP_055502" description="In isoform 2." evidence="8">
    <location>
        <begin position="1"/>
        <end position="106"/>
    </location>
</feature>
<feature type="sequence variant" id="VAR_023534" description="In dbSNP:rs1042038." evidence="7">
    <original>D</original>
    <variation>N</variation>
    <location>
        <position position="37"/>
    </location>
</feature>
<feature type="sequence variant" id="VAR_051287" description="In dbSNP:rs2229345.">
    <original>Q</original>
    <variation>E</variation>
    <location>
        <position position="83"/>
    </location>
</feature>
<feature type="sequence variant" id="VAR_064706" description="Found in a renal cell carcinoma case; somatic mutation." evidence="6">
    <original>P</original>
    <variation>S</variation>
    <location>
        <position position="329"/>
    </location>
</feature>
<feature type="mutagenesis site" description="No membrane-association. No change in the binding to CYTH1; when associated with A-90 and A-92." evidence="4">
    <original>K</original>
    <variation>E</variation>
    <location>
        <position position="82"/>
    </location>
</feature>
<feature type="mutagenesis site" description="No membrane-association. No change in the binding to CYTH1; when associated with E-82 and A-92." evidence="4">
    <original>F</original>
    <variation>A</variation>
    <location>
        <position position="90"/>
    </location>
</feature>
<feature type="mutagenesis site" description="No membrane-association. No change in the binding to CYTH1; when associated with E-82 and A-90." evidence="4">
    <original>I</original>
    <variation>A</variation>
    <location>
        <position position="92"/>
    </location>
</feature>
<feature type="sequence conflict" description="In Ref. 6; AAA16575." evidence="9" ref="6">
    <original>T</original>
    <variation>Q</variation>
    <location>
        <position position="278"/>
    </location>
</feature>
<feature type="sequence conflict" description="In Ref. 6; AAA16575." evidence="9" ref="6">
    <original>KQL</original>
    <variation>RVA</variation>
    <location>
        <begin position="339"/>
        <end position="341"/>
    </location>
</feature>
<feature type="strand" evidence="10">
    <location>
        <begin position="77"/>
        <end position="81"/>
    </location>
</feature>
<feature type="strand" evidence="10">
    <location>
        <begin position="89"/>
        <end position="94"/>
    </location>
</feature>
<feature type="strand" evidence="10">
    <location>
        <begin position="101"/>
        <end position="103"/>
    </location>
</feature>
<feature type="strand" evidence="10">
    <location>
        <begin position="109"/>
        <end position="114"/>
    </location>
</feature>
<feature type="helix" evidence="10">
    <location>
        <begin position="119"/>
        <end position="123"/>
    </location>
</feature>
<feature type="helix" evidence="10">
    <location>
        <begin position="144"/>
        <end position="153"/>
    </location>
</feature>
<feature type="turn" evidence="10">
    <location>
        <begin position="154"/>
        <end position="156"/>
    </location>
</feature>
<feature type="strand" evidence="10">
    <location>
        <begin position="157"/>
        <end position="161"/>
    </location>
</feature>
<sequence length="359" mass="40010">MSLQRLLQHSSNGNLADFCAGPAYSSYSTLTGSLTMDDNRRIQMLADTVATLPRGRKQLALTRSSSLSDFSWSQRKLVTVEKQDNETFGFEIQSYRPQNQNACSSEMFTLICKIQEDSPAHCAGLQAGDVLANINGVSTEGFTYKQVVDLIRSSGNLLTIETLNGTMILKRTELEAKLQVLKQTLKQKWVEYRSLQLQEHRLLHGDAANCPSLENMDLDELSLFGPLPGPGPALVDRNRLSSESSCKSWLSSMTMDSEDGYQTCVSEDSSRGAFSRQTSTDDECFIPKEGDDFLRRSSSRRNRSISNTSSGSMSPLWEGNLSSMFGTLPRKSRKGSVRKQLLKFIPGLHRAVEEEESRF</sequence>
<keyword id="KW-0002">3D-structure</keyword>
<keyword id="KW-0025">Alternative splicing</keyword>
<keyword id="KW-0175">Coiled coil</keyword>
<keyword id="KW-0963">Cytoplasm</keyword>
<keyword id="KW-0967">Endosome</keyword>
<keyword id="KW-1267">Proteomics identification</keyword>
<keyword id="KW-1185">Reference proteome</keyword>
<accession>O60759</accession>
<accession>B4DWH9</accession>
<accession>Q15630</accession>
<accession>Q8NE32</accession>
<dbReference type="EMBL" id="AF068836">
    <property type="protein sequence ID" value="AAC19129.1"/>
    <property type="molecule type" value="mRNA"/>
</dbReference>
<dbReference type="EMBL" id="AK301544">
    <property type="protein sequence ID" value="BAG63041.1"/>
    <property type="molecule type" value="mRNA"/>
</dbReference>
<dbReference type="EMBL" id="AC019201">
    <property type="protein sequence ID" value="AAY14898.1"/>
    <property type="molecule type" value="Genomic_DNA"/>
</dbReference>
<dbReference type="EMBL" id="BC036449">
    <property type="protein sequence ID" value="AAH36449.1"/>
    <property type="molecule type" value="mRNA"/>
</dbReference>
<dbReference type="EMBL" id="L06633">
    <property type="protein sequence ID" value="AAA16575.1"/>
    <property type="status" value="ALT_INIT"/>
    <property type="molecule type" value="mRNA"/>
</dbReference>
<dbReference type="CCDS" id="CCDS2204.1">
    <molecule id="O60759-1"/>
</dbReference>
<dbReference type="PIR" id="S43424">
    <property type="entry name" value="S43424"/>
</dbReference>
<dbReference type="RefSeq" id="NP_004279.3">
    <molecule id="O60759-1"/>
    <property type="nucleotide sequence ID" value="NM_004288.4"/>
</dbReference>
<dbReference type="RefSeq" id="XP_016860875.1">
    <molecule id="O60759-2"/>
    <property type="nucleotide sequence ID" value="XM_017005386.3"/>
</dbReference>
<dbReference type="RefSeq" id="XP_054200643.1">
    <molecule id="O60759-2"/>
    <property type="nucleotide sequence ID" value="XM_054344668.1"/>
</dbReference>
<dbReference type="PDB" id="2Z17">
    <property type="method" value="X-ray"/>
    <property type="resolution" value="2.70 A"/>
    <property type="chains" value="A=67-163"/>
</dbReference>
<dbReference type="PDBsum" id="2Z17"/>
<dbReference type="SMR" id="O60759"/>
<dbReference type="BioGRID" id="114961">
    <property type="interactions" value="16"/>
</dbReference>
<dbReference type="FunCoup" id="O60759">
    <property type="interactions" value="1891"/>
</dbReference>
<dbReference type="IntAct" id="O60759">
    <property type="interactions" value="19"/>
</dbReference>
<dbReference type="MINT" id="O60759"/>
<dbReference type="STRING" id="9606.ENSP00000264192"/>
<dbReference type="iPTMnet" id="O60759"/>
<dbReference type="PhosphoSitePlus" id="O60759"/>
<dbReference type="BioMuta" id="CYTIP"/>
<dbReference type="jPOST" id="O60759"/>
<dbReference type="MassIVE" id="O60759"/>
<dbReference type="PaxDb" id="9606-ENSP00000264192"/>
<dbReference type="PeptideAtlas" id="O60759"/>
<dbReference type="ProteomicsDB" id="49587">
    <molecule id="O60759-1"/>
</dbReference>
<dbReference type="ProteomicsDB" id="5340"/>
<dbReference type="Antibodypedia" id="1992">
    <property type="antibodies" value="126 antibodies from 31 providers"/>
</dbReference>
<dbReference type="DNASU" id="9595"/>
<dbReference type="Ensembl" id="ENST00000264192.8">
    <molecule id="O60759-1"/>
    <property type="protein sequence ID" value="ENSP00000264192.3"/>
    <property type="gene ID" value="ENSG00000115165.11"/>
</dbReference>
<dbReference type="GeneID" id="9595"/>
<dbReference type="KEGG" id="hsa:9595"/>
<dbReference type="MANE-Select" id="ENST00000264192.8">
    <property type="protein sequence ID" value="ENSP00000264192.3"/>
    <property type="RefSeq nucleotide sequence ID" value="NM_004288.5"/>
    <property type="RefSeq protein sequence ID" value="NP_004279.3"/>
</dbReference>
<dbReference type="UCSC" id="uc002tzj.2">
    <molecule id="O60759-1"/>
    <property type="organism name" value="human"/>
</dbReference>
<dbReference type="AGR" id="HGNC:9506"/>
<dbReference type="CTD" id="9595"/>
<dbReference type="DisGeNET" id="9595"/>
<dbReference type="GeneCards" id="CYTIP"/>
<dbReference type="HGNC" id="HGNC:9506">
    <property type="gene designation" value="CYTIP"/>
</dbReference>
<dbReference type="HPA" id="ENSG00000115165">
    <property type="expression patterns" value="Tissue enhanced (bone marrow, lymphoid tissue)"/>
</dbReference>
<dbReference type="MIM" id="604448">
    <property type="type" value="gene"/>
</dbReference>
<dbReference type="neXtProt" id="NX_O60759"/>
<dbReference type="OpenTargets" id="ENSG00000115165"/>
<dbReference type="PharmGKB" id="PA164718652"/>
<dbReference type="VEuPathDB" id="HostDB:ENSG00000115165"/>
<dbReference type="eggNOG" id="KOG3528">
    <property type="taxonomic scope" value="Eukaryota"/>
</dbReference>
<dbReference type="GeneTree" id="ENSGT00530000063734"/>
<dbReference type="HOGENOM" id="CLU_058640_1_0_1"/>
<dbReference type="InParanoid" id="O60759"/>
<dbReference type="OMA" id="SVRKHIF"/>
<dbReference type="OrthoDB" id="10041077at2759"/>
<dbReference type="PAN-GO" id="O60759">
    <property type="GO annotations" value="2 GO annotations based on evolutionary models"/>
</dbReference>
<dbReference type="PhylomeDB" id="O60759"/>
<dbReference type="TreeFam" id="TF316315"/>
<dbReference type="PathwayCommons" id="O60759"/>
<dbReference type="SignaLink" id="O60759"/>
<dbReference type="BioGRID-ORCS" id="9595">
    <property type="hits" value="11 hits in 1144 CRISPR screens"/>
</dbReference>
<dbReference type="ChiTaRS" id="CYTIP">
    <property type="organism name" value="human"/>
</dbReference>
<dbReference type="EvolutionaryTrace" id="O60759"/>
<dbReference type="GeneWiki" id="PSCDBP"/>
<dbReference type="GenomeRNAi" id="9595"/>
<dbReference type="Pharos" id="O60759">
    <property type="development level" value="Tbio"/>
</dbReference>
<dbReference type="PRO" id="PR:O60759"/>
<dbReference type="Proteomes" id="UP000005640">
    <property type="component" value="Chromosome 2"/>
</dbReference>
<dbReference type="RNAct" id="O60759">
    <property type="molecule type" value="protein"/>
</dbReference>
<dbReference type="Bgee" id="ENSG00000115165">
    <property type="expression patterns" value="Expressed in blood and 165 other cell types or tissues"/>
</dbReference>
<dbReference type="ExpressionAtlas" id="O60759">
    <property type="expression patterns" value="baseline and differential"/>
</dbReference>
<dbReference type="GO" id="GO:0005938">
    <property type="term" value="C:cell cortex"/>
    <property type="evidence" value="ECO:0000314"/>
    <property type="project" value="MGI"/>
</dbReference>
<dbReference type="GO" id="GO:0005737">
    <property type="term" value="C:cytoplasm"/>
    <property type="evidence" value="ECO:0000314"/>
    <property type="project" value="MGI"/>
</dbReference>
<dbReference type="GO" id="GO:0005829">
    <property type="term" value="C:cytosol"/>
    <property type="evidence" value="ECO:0000314"/>
    <property type="project" value="HPA"/>
</dbReference>
<dbReference type="GO" id="GO:0005769">
    <property type="term" value="C:early endosome"/>
    <property type="evidence" value="ECO:0007669"/>
    <property type="project" value="UniProtKB-SubCell"/>
</dbReference>
<dbReference type="GO" id="GO:0005654">
    <property type="term" value="C:nucleoplasm"/>
    <property type="evidence" value="ECO:0000314"/>
    <property type="project" value="HPA"/>
</dbReference>
<dbReference type="GO" id="GO:0030155">
    <property type="term" value="P:regulation of cell adhesion"/>
    <property type="evidence" value="ECO:0000314"/>
    <property type="project" value="MGI"/>
</dbReference>
<dbReference type="CDD" id="cd06713">
    <property type="entry name" value="PDZ_tamalin_CYTIP-like"/>
    <property type="match status" value="1"/>
</dbReference>
<dbReference type="FunFam" id="2.30.42.10:FF:000165">
    <property type="entry name" value="Cytohesin-interacting protein isoform X1"/>
    <property type="match status" value="1"/>
</dbReference>
<dbReference type="Gene3D" id="2.30.42.10">
    <property type="match status" value="1"/>
</dbReference>
<dbReference type="InterPro" id="IPR052122">
    <property type="entry name" value="Intracell_Traff_Signaling_Reg"/>
</dbReference>
<dbReference type="InterPro" id="IPR001478">
    <property type="entry name" value="PDZ"/>
</dbReference>
<dbReference type="InterPro" id="IPR036034">
    <property type="entry name" value="PDZ_sf"/>
</dbReference>
<dbReference type="PANTHER" id="PTHR15963:SF1">
    <property type="entry name" value="CYTOHESIN-INTERACTING PROTEIN"/>
    <property type="match status" value="1"/>
</dbReference>
<dbReference type="PANTHER" id="PTHR15963">
    <property type="entry name" value="GENERAL RECEPTOR FOR PHOSPHOINOSITIDES 1-ASSOCIATED SCAFFOLD PROTEIN-RELATED"/>
    <property type="match status" value="1"/>
</dbReference>
<dbReference type="Pfam" id="PF00595">
    <property type="entry name" value="PDZ"/>
    <property type="match status" value="1"/>
</dbReference>
<dbReference type="SMART" id="SM00228">
    <property type="entry name" value="PDZ"/>
    <property type="match status" value="1"/>
</dbReference>
<dbReference type="SUPFAM" id="SSF50156">
    <property type="entry name" value="PDZ domain-like"/>
    <property type="match status" value="1"/>
</dbReference>
<dbReference type="PROSITE" id="PS50106">
    <property type="entry name" value="PDZ"/>
    <property type="match status" value="1"/>
</dbReference>
<gene>
    <name type="primary">CYTIP</name>
    <name type="synonym">PSCDBP</name>
</gene>
<protein>
    <recommendedName>
        <fullName>Cytohesin-interacting protein</fullName>
    </recommendedName>
    <alternativeName>
        <fullName>Cytohesin binder and regulator</fullName>
        <shortName>CYBR</shortName>
    </alternativeName>
    <alternativeName>
        <fullName>Cytohesin-associated scaffolding protein</fullName>
        <shortName>CASP</shortName>
    </alternativeName>
    <alternativeName>
        <fullName>Cytohesin-binding protein HE</fullName>
        <shortName>Cbp HE</shortName>
    </alternativeName>
    <alternativeName>
        <fullName>Pleckstrin homology Sec7 and coiled-coil domains-binding protein</fullName>
    </alternativeName>
</protein>
<name>CYTIP_HUMAN</name>